<evidence type="ECO:0000250" key="1"/>
<evidence type="ECO:0000255" key="2"/>
<evidence type="ECO:0000305" key="3"/>
<name>NPB_RAT</name>
<dbReference type="EMBL" id="AB085944">
    <property type="protein sequence ID" value="BAC07177.1"/>
    <property type="molecule type" value="mRNA"/>
</dbReference>
<dbReference type="RefSeq" id="NP_695205.1">
    <property type="nucleotide sequence ID" value="NM_153293.2"/>
</dbReference>
<dbReference type="FunCoup" id="Q8K4P2">
    <property type="interactions" value="820"/>
</dbReference>
<dbReference type="STRING" id="10116.ENSRNOP00000051836"/>
<dbReference type="PhosphoSitePlus" id="Q8K4P2"/>
<dbReference type="PaxDb" id="10116-ENSRNOP00000051836"/>
<dbReference type="Ensembl" id="ENSRNOT00000054954.5">
    <property type="protein sequence ID" value="ENSRNOP00000051837.3"/>
    <property type="gene ID" value="ENSRNOG00000036686.5"/>
</dbReference>
<dbReference type="GeneID" id="259222"/>
<dbReference type="KEGG" id="rno:259222"/>
<dbReference type="AGR" id="RGD:708513"/>
<dbReference type="CTD" id="256933"/>
<dbReference type="RGD" id="708513">
    <property type="gene designation" value="Npb"/>
</dbReference>
<dbReference type="eggNOG" id="ENOG502S25S">
    <property type="taxonomic scope" value="Eukaryota"/>
</dbReference>
<dbReference type="GeneTree" id="ENSGT00940000158204"/>
<dbReference type="HOGENOM" id="CLU_1991876_0_0_1"/>
<dbReference type="InParanoid" id="Q8K4P2"/>
<dbReference type="OMA" id="ATFQCRA"/>
<dbReference type="OrthoDB" id="9942334at2759"/>
<dbReference type="PhylomeDB" id="Q8K4P2"/>
<dbReference type="TreeFam" id="TF333179"/>
<dbReference type="Reactome" id="R-RNO-375276">
    <property type="pathway name" value="Peptide ligand-binding receptors"/>
</dbReference>
<dbReference type="Reactome" id="R-RNO-418594">
    <property type="pathway name" value="G alpha (i) signalling events"/>
</dbReference>
<dbReference type="PRO" id="PR:Q8K4P2"/>
<dbReference type="Proteomes" id="UP000002494">
    <property type="component" value="Chromosome 10"/>
</dbReference>
<dbReference type="Bgee" id="ENSRNOG00000036685">
    <property type="expression patterns" value="Expressed in spleen and 17 other cell types or tissues"/>
</dbReference>
<dbReference type="GO" id="GO:0005680">
    <property type="term" value="C:anaphase-promoting complex"/>
    <property type="evidence" value="ECO:0007669"/>
    <property type="project" value="Ensembl"/>
</dbReference>
<dbReference type="GO" id="GO:0005576">
    <property type="term" value="C:extracellular region"/>
    <property type="evidence" value="ECO:0007669"/>
    <property type="project" value="UniProtKB-SubCell"/>
</dbReference>
<dbReference type="GO" id="GO:0005730">
    <property type="term" value="C:nucleolus"/>
    <property type="evidence" value="ECO:0007669"/>
    <property type="project" value="Ensembl"/>
</dbReference>
<dbReference type="GO" id="GO:0005654">
    <property type="term" value="C:nucleoplasm"/>
    <property type="evidence" value="ECO:0007669"/>
    <property type="project" value="Ensembl"/>
</dbReference>
<dbReference type="GO" id="GO:0097602">
    <property type="term" value="F:cullin family protein binding"/>
    <property type="evidence" value="ECO:0007669"/>
    <property type="project" value="Ensembl"/>
</dbReference>
<dbReference type="GO" id="GO:0001664">
    <property type="term" value="F:G protein-coupled receptor binding"/>
    <property type="evidence" value="ECO:0000315"/>
    <property type="project" value="RGD"/>
</dbReference>
<dbReference type="GO" id="GO:0034450">
    <property type="term" value="F:ubiquitin-ubiquitin ligase activity"/>
    <property type="evidence" value="ECO:0007669"/>
    <property type="project" value="Ensembl"/>
</dbReference>
<dbReference type="GO" id="GO:0031145">
    <property type="term" value="P:anaphase-promoting complex-dependent catabolic process"/>
    <property type="evidence" value="ECO:0007669"/>
    <property type="project" value="Ensembl"/>
</dbReference>
<dbReference type="GO" id="GO:0007631">
    <property type="term" value="P:feeding behavior"/>
    <property type="evidence" value="ECO:0000318"/>
    <property type="project" value="GO_Central"/>
</dbReference>
<dbReference type="GO" id="GO:0007186">
    <property type="term" value="P:G protein-coupled receptor signaling pathway"/>
    <property type="evidence" value="ECO:0000266"/>
    <property type="project" value="RGD"/>
</dbReference>
<dbReference type="GO" id="GO:0007218">
    <property type="term" value="P:neuropeptide signaling pathway"/>
    <property type="evidence" value="ECO:0007669"/>
    <property type="project" value="UniProtKB-KW"/>
</dbReference>
<dbReference type="GO" id="GO:0045842">
    <property type="term" value="P:positive regulation of mitotic metaphase/anaphase transition"/>
    <property type="evidence" value="ECO:0007669"/>
    <property type="project" value="Ensembl"/>
</dbReference>
<dbReference type="GO" id="GO:0141198">
    <property type="term" value="P:protein branched polyubiquitination"/>
    <property type="evidence" value="ECO:0007669"/>
    <property type="project" value="Ensembl"/>
</dbReference>
<dbReference type="GO" id="GO:0070979">
    <property type="term" value="P:protein K11-linked ubiquitination"/>
    <property type="evidence" value="ECO:0007669"/>
    <property type="project" value="Ensembl"/>
</dbReference>
<dbReference type="GO" id="GO:0070936">
    <property type="term" value="P:protein K48-linked ubiquitination"/>
    <property type="evidence" value="ECO:0007669"/>
    <property type="project" value="Ensembl"/>
</dbReference>
<dbReference type="InterPro" id="IPR013298">
    <property type="entry name" value="Neuropept_B_pre"/>
</dbReference>
<dbReference type="InterPro" id="IPR013297">
    <property type="entry name" value="Neuropept_BW_pre"/>
</dbReference>
<dbReference type="PANTHER" id="PTHR28553">
    <property type="entry name" value="NEUROPEPTIDE B"/>
    <property type="match status" value="1"/>
</dbReference>
<dbReference type="PANTHER" id="PTHR28553:SF1">
    <property type="entry name" value="NEUROPEPTIDE B"/>
    <property type="match status" value="1"/>
</dbReference>
<dbReference type="Pfam" id="PF15180">
    <property type="entry name" value="NPBW"/>
    <property type="match status" value="1"/>
</dbReference>
<dbReference type="PRINTS" id="PR01888">
    <property type="entry name" value="NROPEPTIDEBW"/>
</dbReference>
<dbReference type="PRINTS" id="PR01889">
    <property type="entry name" value="PPNRPEPTIDEB"/>
</dbReference>
<sequence>MVRCRTLVAAALALLLTPALAWYKPAAGSHHYSVGRAAGLLSSFHRFPSTRRSESPALRVGTVPLRNLEMRPSVRSLALCVKDVTPNLQSCQRQLNSRGTFQCKADVFLSLHKAECQSA</sequence>
<accession>Q8K4P2</accession>
<proteinExistence type="evidence at transcript level"/>
<comment type="function">
    <text evidence="1">May be involved in the regulation of feeding, neuroendocrine system, memory and learning. May be involved in the afferent pain pathway (By similarity).</text>
</comment>
<comment type="subcellular location">
    <subcellularLocation>
        <location>Secreted</location>
    </subcellularLocation>
</comment>
<comment type="tissue specificity">
    <text>Detected in a variety of tissues. High levels are found in the lymphoid organs, central nervous system, mammary gland and uterus.</text>
</comment>
<comment type="similarity">
    <text evidence="3">Belongs to the neuropeptide B/W family.</text>
</comment>
<keyword id="KW-0165">Cleavage on pair of basic residues</keyword>
<keyword id="KW-0527">Neuropeptide</keyword>
<keyword id="KW-1185">Reference proteome</keyword>
<keyword id="KW-0964">Secreted</keyword>
<keyword id="KW-0732">Signal</keyword>
<gene>
    <name type="primary">Npb</name>
</gene>
<reference key="1">
    <citation type="journal article" date="2002" name="J. Biol. Chem.">
        <title>Identification of a neuropeptide modified with bromine as an endogenous ligand for GPR7.</title>
        <authorList>
            <person name="Fujii R."/>
            <person name="Yoshida H."/>
            <person name="Fukusumi S."/>
            <person name="Habata Y."/>
            <person name="Hosoya M."/>
            <person name="Kawamata Y."/>
            <person name="Yano T."/>
            <person name="Hinuma S."/>
            <person name="Kitada C."/>
            <person name="Asami T."/>
            <person name="Mori M."/>
            <person name="Fujisawa Y."/>
            <person name="Fujino M."/>
        </authorList>
    </citation>
    <scope>NUCLEOTIDE SEQUENCE [MRNA]</scope>
</reference>
<feature type="signal peptide" evidence="2">
    <location>
        <begin position="1"/>
        <end position="21"/>
    </location>
</feature>
<feature type="peptide" id="PRO_0000019841" description="Neuropeptide B-29">
    <location>
        <begin position="22"/>
        <end position="50"/>
    </location>
</feature>
<feature type="propeptide" id="PRO_0000019842" evidence="2">
    <location>
        <begin position="53"/>
        <end position="119"/>
    </location>
</feature>
<protein>
    <recommendedName>
        <fullName>Neuropeptide B</fullName>
    </recommendedName>
    <alternativeName>
        <fullName>Preproprotein L7</fullName>
        <shortName>rPPL7</shortName>
    </alternativeName>
    <component>
        <recommendedName>
            <fullName>Neuropeptide B-29</fullName>
            <shortName>NPB29</shortName>
        </recommendedName>
        <alternativeName>
            <fullName>L7C</fullName>
        </alternativeName>
    </component>
</protein>
<organism>
    <name type="scientific">Rattus norvegicus</name>
    <name type="common">Rat</name>
    <dbReference type="NCBI Taxonomy" id="10116"/>
    <lineage>
        <taxon>Eukaryota</taxon>
        <taxon>Metazoa</taxon>
        <taxon>Chordata</taxon>
        <taxon>Craniata</taxon>
        <taxon>Vertebrata</taxon>
        <taxon>Euteleostomi</taxon>
        <taxon>Mammalia</taxon>
        <taxon>Eutheria</taxon>
        <taxon>Euarchontoglires</taxon>
        <taxon>Glires</taxon>
        <taxon>Rodentia</taxon>
        <taxon>Myomorpha</taxon>
        <taxon>Muroidea</taxon>
        <taxon>Muridae</taxon>
        <taxon>Murinae</taxon>
        <taxon>Rattus</taxon>
    </lineage>
</organism>